<name>XYLT_CAEEL</name>
<keyword id="KW-0217">Developmental protein</keyword>
<keyword id="KW-1015">Disulfide bond</keyword>
<keyword id="KW-0256">Endoplasmic reticulum</keyword>
<keyword id="KW-0325">Glycoprotein</keyword>
<keyword id="KW-0328">Glycosyltransferase</keyword>
<keyword id="KW-0333">Golgi apparatus</keyword>
<keyword id="KW-0472">Membrane</keyword>
<keyword id="KW-0479">Metal-binding</keyword>
<keyword id="KW-1185">Reference proteome</keyword>
<keyword id="KW-0735">Signal-anchor</keyword>
<keyword id="KW-0808">Transferase</keyword>
<keyword id="KW-0812">Transmembrane</keyword>
<keyword id="KW-1133">Transmembrane helix</keyword>
<feature type="chain" id="PRO_0000191413" description="Xylosyltransferase sqv-6">
    <location>
        <begin position="1"/>
        <end position="806"/>
    </location>
</feature>
<feature type="topological domain" description="Cytoplasmic" evidence="3">
    <location>
        <begin position="1"/>
        <end position="11"/>
    </location>
</feature>
<feature type="transmembrane region" description="Helical; Signal-anchor for type II membrane protein" evidence="3">
    <location>
        <begin position="12"/>
        <end position="32"/>
    </location>
</feature>
<feature type="topological domain" description="Lumenal" evidence="3">
    <location>
        <begin position="33"/>
        <end position="806"/>
    </location>
</feature>
<feature type="domain" description="WSC" evidence="4">
    <location>
        <begin position="109"/>
        <end position="205"/>
    </location>
</feature>
<feature type="binding site" evidence="2">
    <location>
        <position position="264"/>
    </location>
    <ligand>
        <name>UDP-alpha-D-xylose</name>
        <dbReference type="ChEBI" id="CHEBI:57632"/>
    </ligand>
</feature>
<feature type="binding site" evidence="2">
    <location>
        <begin position="293"/>
        <end position="295"/>
    </location>
    <ligand>
        <name>UDP-alpha-D-xylose</name>
        <dbReference type="ChEBI" id="CHEBI:57632"/>
    </ligand>
</feature>
<feature type="binding site" evidence="2">
    <location>
        <begin position="398"/>
        <end position="399"/>
    </location>
    <ligand>
        <name>UDP-alpha-D-xylose</name>
        <dbReference type="ChEBI" id="CHEBI:57632"/>
    </ligand>
</feature>
<feature type="binding site" evidence="2">
    <location>
        <position position="479"/>
    </location>
    <ligand>
        <name>UDP-alpha-D-xylose</name>
        <dbReference type="ChEBI" id="CHEBI:57632"/>
    </ligand>
</feature>
<feature type="binding site" evidence="2">
    <location>
        <begin position="505"/>
        <end position="506"/>
    </location>
    <ligand>
        <name>UDP-alpha-D-xylose</name>
        <dbReference type="ChEBI" id="CHEBI:57632"/>
    </ligand>
</feature>
<feature type="glycosylation site" description="N-linked (GlcNAc...) asparagine" evidence="3">
    <location>
        <position position="89"/>
    </location>
</feature>
<feature type="glycosylation site" description="N-linked (GlcNAc...) asparagine" evidence="3">
    <location>
        <position position="169"/>
    </location>
</feature>
<feature type="glycosylation site" description="N-linked (GlcNAc...) asparagine" evidence="3">
    <location>
        <position position="325"/>
    </location>
</feature>
<feature type="glycosylation site" description="N-linked (GlcNAc...) asparagine" evidence="6">
    <location>
        <position position="614"/>
    </location>
</feature>
<feature type="glycosylation site" description="N-linked (GlcNAc...) asparagine" evidence="6">
    <location>
        <position position="655"/>
    </location>
</feature>
<feature type="glycosylation site" description="N-linked (GlcNAc...) asparagine" evidence="3">
    <location>
        <position position="719"/>
    </location>
</feature>
<feature type="disulfide bond" evidence="2">
    <location>
        <begin position="57"/>
        <end position="85"/>
    </location>
</feature>
<feature type="disulfide bond" evidence="2">
    <location>
        <begin position="101"/>
        <end position="445"/>
    </location>
</feature>
<feature type="disulfide bond" evidence="2">
    <location>
        <begin position="464"/>
        <end position="478"/>
    </location>
</feature>
<feature type="disulfide bond" evidence="2">
    <location>
        <begin position="466"/>
        <end position="476"/>
    </location>
</feature>
<feature type="disulfide bond" evidence="2">
    <location>
        <begin position="772"/>
        <end position="778"/>
    </location>
</feature>
<sequence length="806" mass="93115">MLFNGTTKYRDYAIVISLFFLLNVYLLYNTAQHTQVGNSKHISSDSGEKTSNPLPSCEITDDLAKSAISRAITPSCKAKLQLEACQLKNGTFTINFPENQCPNHDSRLIDQRIGCFLDKKEARVLTEFEYKLPKSNGKATCRKHCYKAGFLYFGLEFGHECFCGNDVSNATAVDDVECRAYKCPGNENSEEFCGGFNAVEIFRTGFRSKVNHRKPTYLPPSSDSIKNPVKILFLLQLNGRNERQVKRFLKSIYLPHHYYYIHVDARQNYMFSEMQKVADFLDNIHITERRFSTIWGGASLLQMFLQVIRDSMKIEKFKDWDYIINFSESDFPILPISDFERLITVNNGKSFLASHGYNTGKFIQKQGFEYVFSECDNRMFRIGKREFPQNLRIDGGSDWVGIHRNLAEFSISDEELPRKLRKTYESILLPLESFYHTLAFNSEFCDDLLMSNLRLTNWYRKQGCRCASLKPIVDWCGCSPLVFREETMKKFELQKAISKPTYFARKFDSMVDIDSIEAAEMQSISPEKLQLNHPTYHFAFANIFKTGIDEQKLHFESLANFALKSTETRAKFRKVLRIDALRAHHNALIEIVMKIETTDGATFEFLIHRLSHVNLTENEEKLVEHGYLLRAVSFGTKFEWKEELCREYMGFVTDNDTLHTRLQWHPTEHVKKVGDKTSPEMIFKYRKGDELIEQTVVKPYDSVFGGQFDSWNVGKKLSNLTTCSNFFVDIISPSSPDDAPPLATLHFPVYTDQNAHCHVDYLRQFFKIADFCTSGDACKEKIWSTSYPDPKSDIFVGYDEDTQTLI</sequence>
<comment type="function">
    <text evidence="5">Catalyzes the first step in biosynthesis of glycosaminoglycan. Transfers D-xylose from UDP-D-xylose to specific serine residues of the core protein. Required for vulval morphogenesis and zygotic cytokinesis, suggesting that glycosaminoglycans play a central role in vulval morphogenesis.</text>
</comment>
<comment type="catalytic activity">
    <reaction evidence="5">
        <text>UDP-alpha-D-xylose + L-seryl-[protein] = 3-O-(beta-D-xylosyl)-L-seryl-[protein] + UDP + H(+)</text>
        <dbReference type="Rhea" id="RHEA:50192"/>
        <dbReference type="Rhea" id="RHEA-COMP:9863"/>
        <dbReference type="Rhea" id="RHEA-COMP:12567"/>
        <dbReference type="ChEBI" id="CHEBI:15378"/>
        <dbReference type="ChEBI" id="CHEBI:29999"/>
        <dbReference type="ChEBI" id="CHEBI:57632"/>
        <dbReference type="ChEBI" id="CHEBI:58223"/>
        <dbReference type="ChEBI" id="CHEBI:132085"/>
        <dbReference type="EC" id="2.4.2.26"/>
    </reaction>
</comment>
<comment type="cofactor">
    <cofactor evidence="1">
        <name>a divalent metal cation</name>
        <dbReference type="ChEBI" id="CHEBI:60240"/>
    </cofactor>
</comment>
<comment type="pathway">
    <text>Glycan metabolism; chondroitin sulfate biosynthesis.</text>
</comment>
<comment type="pathway">
    <text>Glycan metabolism; heparan sulfate biosynthesis.</text>
</comment>
<comment type="subcellular location">
    <subcellularLocation>
        <location evidence="1">Endoplasmic reticulum membrane</location>
        <topology evidence="1">Single-pass type II membrane protein</topology>
    </subcellularLocation>
    <subcellularLocation>
        <location evidence="1">Golgi apparatus membrane</location>
        <topology evidence="1">Single-pass type II membrane protein</topology>
    </subcellularLocation>
</comment>
<comment type="disruption phenotype">
    <text evidence="5">Worms are infertile because of the failure of the progeny of homozygous mutants to initiate cytokinesis and because of the failure to form an extracellular space between the egg and the eggshell.</text>
</comment>
<comment type="similarity">
    <text evidence="7">Belongs to the glycosyltransferase 14 family. XylT subfamily.</text>
</comment>
<organism evidence="8">
    <name type="scientific">Caenorhabditis elegans</name>
    <dbReference type="NCBI Taxonomy" id="6239"/>
    <lineage>
        <taxon>Eukaryota</taxon>
        <taxon>Metazoa</taxon>
        <taxon>Ecdysozoa</taxon>
        <taxon>Nematoda</taxon>
        <taxon>Chromadorea</taxon>
        <taxon>Rhabditida</taxon>
        <taxon>Rhabditina</taxon>
        <taxon>Rhabditomorpha</taxon>
        <taxon>Rhabditoidea</taxon>
        <taxon>Rhabditidae</taxon>
        <taxon>Peloderinae</taxon>
        <taxon>Caenorhabditis</taxon>
    </lineage>
</organism>
<evidence type="ECO:0000250" key="1"/>
<evidence type="ECO:0000250" key="2">
    <source>
        <dbReference type="UniProtKB" id="Q86Y38"/>
    </source>
</evidence>
<evidence type="ECO:0000255" key="3"/>
<evidence type="ECO:0000255" key="4">
    <source>
        <dbReference type="PROSITE-ProRule" id="PRU00558"/>
    </source>
</evidence>
<evidence type="ECO:0000269" key="5">
    <source>
    </source>
</evidence>
<evidence type="ECO:0000269" key="6">
    <source>
    </source>
</evidence>
<evidence type="ECO:0000305" key="7"/>
<evidence type="ECO:0000312" key="8">
    <source>
        <dbReference type="Proteomes" id="UP000001940"/>
    </source>
</evidence>
<evidence type="ECO:0000312" key="9">
    <source>
        <dbReference type="WormBase" id="Y50D4C.4a"/>
    </source>
</evidence>
<accession>Q965Q8</accession>
<accession>Q867S3</accession>
<proteinExistence type="evidence at protein level"/>
<gene>
    <name evidence="9" type="primary">sqv-6</name>
    <name evidence="9" type="ORF">Y50D4C.4</name>
</gene>
<reference key="1">
    <citation type="journal article" date="2003" name="J. Biol. Chem.">
        <title>The Caenorhabditis elegans genes sqv-2 and sqv-6, which are required for vulval morphogenesis, encode glycosaminoglycan galactosyltransferase II and xylosyltransferase.</title>
        <authorList>
            <person name="Hwang H.-Y."/>
            <person name="Olson S.K."/>
            <person name="Brown J.R."/>
            <person name="Esko J.D."/>
            <person name="Horvitz H.R."/>
        </authorList>
    </citation>
    <scope>NUCLEOTIDE SEQUENCE [MRNA]</scope>
    <scope>FUNCTION</scope>
    <scope>ENZYME ACTIVITY</scope>
    <scope>DISRUPTION PHENOTYPE</scope>
</reference>
<reference key="2">
    <citation type="submission" date="2002-07" db="EMBL/GenBank/DDBJ databases">
        <title>Cloning of Caenorhabditis elegans xylosyltransferase cDNA.</title>
        <authorList>
            <person name="Wilson I.B.H."/>
        </authorList>
    </citation>
    <scope>NUCLEOTIDE SEQUENCE [MRNA]</scope>
</reference>
<reference key="3">
    <citation type="journal article" date="1998" name="Science">
        <title>Genome sequence of the nematode C. elegans: a platform for investigating biology.</title>
        <authorList>
            <consortium name="The C. elegans sequencing consortium"/>
        </authorList>
    </citation>
    <scope>NUCLEOTIDE SEQUENCE [LARGE SCALE GENOMIC DNA]</scope>
    <source>
        <strain>Bristol N2</strain>
    </source>
</reference>
<reference key="4">
    <citation type="journal article" date="2007" name="Mol. Cell. Proteomics">
        <title>Proteomics reveals N-linked glycoprotein diversity in Caenorhabditis elegans and suggests an atypical translocation mechanism for integral membrane proteins.</title>
        <authorList>
            <person name="Kaji H."/>
            <person name="Kamiie J."/>
            <person name="Kawakami H."/>
            <person name="Kido K."/>
            <person name="Yamauchi Y."/>
            <person name="Shinkawa T."/>
            <person name="Taoka M."/>
            <person name="Takahashi N."/>
            <person name="Isobe T."/>
        </authorList>
    </citation>
    <scope>GLYCOSYLATION [LARGE SCALE ANALYSIS] AT ASN-614 AND ASN-655</scope>
    <scope>IDENTIFICATION BY MASS SPECTROMETRY</scope>
    <source>
        <strain>Bristol N2</strain>
    </source>
</reference>
<dbReference type="EC" id="2.4.2.26" evidence="5"/>
<dbReference type="EMBL" id="AY241928">
    <property type="protein sequence ID" value="AAO85277.1"/>
    <property type="molecule type" value="mRNA"/>
</dbReference>
<dbReference type="EMBL" id="AJ496235">
    <property type="protein sequence ID" value="CAD42732.1"/>
    <property type="molecule type" value="mRNA"/>
</dbReference>
<dbReference type="EMBL" id="FO081564">
    <property type="protein sequence ID" value="CCD72442.1"/>
    <property type="molecule type" value="Genomic_DNA"/>
</dbReference>
<dbReference type="RefSeq" id="NP_503359.2">
    <property type="nucleotide sequence ID" value="NM_070958.6"/>
</dbReference>
<dbReference type="SMR" id="Q965Q8"/>
<dbReference type="BioGRID" id="54695">
    <property type="interactions" value="2"/>
</dbReference>
<dbReference type="FunCoup" id="Q965Q8">
    <property type="interactions" value="824"/>
</dbReference>
<dbReference type="STRING" id="6239.Y50D4C.4a.1"/>
<dbReference type="CAZy" id="GT14">
    <property type="family name" value="Glycosyltransferase Family 14"/>
</dbReference>
<dbReference type="GlyCosmos" id="Q965Q8">
    <property type="glycosylation" value="6 sites, No reported glycans"/>
</dbReference>
<dbReference type="iPTMnet" id="Q965Q8"/>
<dbReference type="PaxDb" id="6239-Y50D4C.4"/>
<dbReference type="PeptideAtlas" id="Q965Q8"/>
<dbReference type="EnsemblMetazoa" id="Y50D4C.4a.1">
    <property type="protein sequence ID" value="Y50D4C.4a.1"/>
    <property type="gene ID" value="WBGene00005024"/>
</dbReference>
<dbReference type="GeneID" id="190099"/>
<dbReference type="KEGG" id="cel:CELE_Y50D4C.4"/>
<dbReference type="UCSC" id="Y50D4C.4">
    <property type="organism name" value="c. elegans"/>
</dbReference>
<dbReference type="AGR" id="WB:WBGene00005024"/>
<dbReference type="CTD" id="190099"/>
<dbReference type="WormBase" id="Y50D4C.4a">
    <property type="protein sequence ID" value="CE35919"/>
    <property type="gene ID" value="WBGene00005024"/>
    <property type="gene designation" value="sqv-6"/>
</dbReference>
<dbReference type="eggNOG" id="KOG0799">
    <property type="taxonomic scope" value="Eukaryota"/>
</dbReference>
<dbReference type="eggNOG" id="KOG4157">
    <property type="taxonomic scope" value="Eukaryota"/>
</dbReference>
<dbReference type="GeneTree" id="ENSGT00940000169133"/>
<dbReference type="HOGENOM" id="CLU_012840_1_0_1"/>
<dbReference type="InParanoid" id="Q965Q8"/>
<dbReference type="OMA" id="RMFRIGK"/>
<dbReference type="OrthoDB" id="2019572at2759"/>
<dbReference type="PhylomeDB" id="Q965Q8"/>
<dbReference type="BRENDA" id="2.4.2.26">
    <property type="organism ID" value="1045"/>
</dbReference>
<dbReference type="Reactome" id="R-CEL-1971475">
    <property type="pathway name" value="A tetrasaccharide linker sequence is required for GAG synthesis"/>
</dbReference>
<dbReference type="UniPathway" id="UPA00755"/>
<dbReference type="UniPathway" id="UPA00756"/>
<dbReference type="PRO" id="PR:Q965Q8"/>
<dbReference type="Proteomes" id="UP000001940">
    <property type="component" value="Chromosome V"/>
</dbReference>
<dbReference type="Bgee" id="WBGene00005024">
    <property type="expression patterns" value="Expressed in adult organism and 3 other cell types or tissues"/>
</dbReference>
<dbReference type="ExpressionAtlas" id="Q965Q8">
    <property type="expression patterns" value="baseline and differential"/>
</dbReference>
<dbReference type="GO" id="GO:0005789">
    <property type="term" value="C:endoplasmic reticulum membrane"/>
    <property type="evidence" value="ECO:0007669"/>
    <property type="project" value="UniProtKB-SubCell"/>
</dbReference>
<dbReference type="GO" id="GO:0000139">
    <property type="term" value="C:Golgi membrane"/>
    <property type="evidence" value="ECO:0007669"/>
    <property type="project" value="UniProtKB-SubCell"/>
</dbReference>
<dbReference type="GO" id="GO:0046872">
    <property type="term" value="F:metal ion binding"/>
    <property type="evidence" value="ECO:0007669"/>
    <property type="project" value="UniProtKB-KW"/>
</dbReference>
<dbReference type="GO" id="GO:0030158">
    <property type="term" value="F:protein xylosyltransferase activity"/>
    <property type="evidence" value="ECO:0000314"/>
    <property type="project" value="WormBase"/>
</dbReference>
<dbReference type="GO" id="GO:0050650">
    <property type="term" value="P:chondroitin sulfate proteoglycan biosynthetic process"/>
    <property type="evidence" value="ECO:0000316"/>
    <property type="project" value="WormBase"/>
</dbReference>
<dbReference type="GO" id="GO:0018991">
    <property type="term" value="P:egg-laying behavior"/>
    <property type="evidence" value="ECO:0000315"/>
    <property type="project" value="WormBase"/>
</dbReference>
<dbReference type="GO" id="GO:0015012">
    <property type="term" value="P:heparan sulfate proteoglycan biosynthetic process"/>
    <property type="evidence" value="ECO:0000318"/>
    <property type="project" value="GO_Central"/>
</dbReference>
<dbReference type="GO" id="GO:0030210">
    <property type="term" value="P:heparin proteoglycan biosynthetic process"/>
    <property type="evidence" value="ECO:0000316"/>
    <property type="project" value="WormBase"/>
</dbReference>
<dbReference type="GO" id="GO:0002009">
    <property type="term" value="P:morphogenesis of an epithelium"/>
    <property type="evidence" value="ECO:0000315"/>
    <property type="project" value="WormBase"/>
</dbReference>
<dbReference type="GO" id="GO:0022414">
    <property type="term" value="P:reproductive process"/>
    <property type="evidence" value="ECO:0000315"/>
    <property type="project" value="WormBase"/>
</dbReference>
<dbReference type="GO" id="GO:0033319">
    <property type="term" value="P:UDP-D-xylose metabolic process"/>
    <property type="evidence" value="ECO:0000314"/>
    <property type="project" value="WormBase"/>
</dbReference>
<dbReference type="GO" id="GO:0040025">
    <property type="term" value="P:vulval development"/>
    <property type="evidence" value="ECO:0000315"/>
    <property type="project" value="WormBase"/>
</dbReference>
<dbReference type="InterPro" id="IPR003406">
    <property type="entry name" value="Glyco_trans_14"/>
</dbReference>
<dbReference type="InterPro" id="IPR002889">
    <property type="entry name" value="WSC_carb-bd"/>
</dbReference>
<dbReference type="InterPro" id="IPR043538">
    <property type="entry name" value="XYLT"/>
</dbReference>
<dbReference type="PANTHER" id="PTHR46025">
    <property type="entry name" value="XYLOSYLTRANSFERASE OXT"/>
    <property type="match status" value="1"/>
</dbReference>
<dbReference type="PANTHER" id="PTHR46025:SF3">
    <property type="entry name" value="XYLOSYLTRANSFERASE OXT"/>
    <property type="match status" value="1"/>
</dbReference>
<dbReference type="Pfam" id="PF02485">
    <property type="entry name" value="Branch"/>
    <property type="match status" value="1"/>
</dbReference>
<dbReference type="Pfam" id="PF01822">
    <property type="entry name" value="WSC"/>
    <property type="match status" value="1"/>
</dbReference>
<dbReference type="SMART" id="SM00321">
    <property type="entry name" value="WSC"/>
    <property type="match status" value="1"/>
</dbReference>
<dbReference type="PROSITE" id="PS51212">
    <property type="entry name" value="WSC"/>
    <property type="match status" value="1"/>
</dbReference>
<protein>
    <recommendedName>
        <fullName>Xylosyltransferase sqv-6</fullName>
        <ecNumber evidence="5">2.4.2.26</ecNumber>
    </recommendedName>
    <alternativeName>
        <fullName>Peptide O-xylosyltransferase</fullName>
    </alternativeName>
    <alternativeName>
        <fullName>Squashed vulva protein 6</fullName>
    </alternativeName>
</protein>